<sequence length="94" mass="10607">MTKSELIERLASQQSHIPAKAVEDAVKEMLEHMASTLAQGERIEIRGFGSFSLHYRAPRTGRNPKTGDKVELEGKYVPHFKPGKELRDRANIYG</sequence>
<name>IHFB_SALAR</name>
<reference key="1">
    <citation type="submission" date="2007-11" db="EMBL/GenBank/DDBJ databases">
        <authorList>
            <consortium name="The Salmonella enterica serovar Arizonae Genome Sequencing Project"/>
            <person name="McClelland M."/>
            <person name="Sanderson E.K."/>
            <person name="Porwollik S."/>
            <person name="Spieth J."/>
            <person name="Clifton W.S."/>
            <person name="Fulton R."/>
            <person name="Chunyan W."/>
            <person name="Wollam A."/>
            <person name="Shah N."/>
            <person name="Pepin K."/>
            <person name="Bhonagiri V."/>
            <person name="Nash W."/>
            <person name="Johnson M."/>
            <person name="Thiruvilangam P."/>
            <person name="Wilson R."/>
        </authorList>
    </citation>
    <scope>NUCLEOTIDE SEQUENCE [LARGE SCALE GENOMIC DNA]</scope>
    <source>
        <strain>ATCC BAA-731 / CDC346-86 / RSK2980</strain>
    </source>
</reference>
<protein>
    <recommendedName>
        <fullName evidence="1">Integration host factor subunit beta</fullName>
        <shortName evidence="1">IHF-beta</shortName>
    </recommendedName>
</protein>
<keyword id="KW-0233">DNA recombination</keyword>
<keyword id="KW-0238">DNA-binding</keyword>
<keyword id="KW-1185">Reference proteome</keyword>
<keyword id="KW-0804">Transcription</keyword>
<keyword id="KW-0805">Transcription regulation</keyword>
<keyword id="KW-0810">Translation regulation</keyword>
<accession>A9MHX0</accession>
<proteinExistence type="inferred from homology"/>
<dbReference type="EMBL" id="CP000880">
    <property type="protein sequence ID" value="ABX21860.1"/>
    <property type="molecule type" value="Genomic_DNA"/>
</dbReference>
<dbReference type="SMR" id="A9MHX0"/>
<dbReference type="STRING" id="41514.SARI_01980"/>
<dbReference type="KEGG" id="ses:SARI_01980"/>
<dbReference type="HOGENOM" id="CLU_105066_2_0_6"/>
<dbReference type="Proteomes" id="UP000002084">
    <property type="component" value="Chromosome"/>
</dbReference>
<dbReference type="GO" id="GO:0005694">
    <property type="term" value="C:chromosome"/>
    <property type="evidence" value="ECO:0007669"/>
    <property type="project" value="InterPro"/>
</dbReference>
<dbReference type="GO" id="GO:0005829">
    <property type="term" value="C:cytosol"/>
    <property type="evidence" value="ECO:0007669"/>
    <property type="project" value="TreeGrafter"/>
</dbReference>
<dbReference type="GO" id="GO:0003677">
    <property type="term" value="F:DNA binding"/>
    <property type="evidence" value="ECO:0007669"/>
    <property type="project" value="UniProtKB-UniRule"/>
</dbReference>
<dbReference type="GO" id="GO:0030527">
    <property type="term" value="F:structural constituent of chromatin"/>
    <property type="evidence" value="ECO:0007669"/>
    <property type="project" value="InterPro"/>
</dbReference>
<dbReference type="GO" id="GO:0006310">
    <property type="term" value="P:DNA recombination"/>
    <property type="evidence" value="ECO:0007669"/>
    <property type="project" value="UniProtKB-UniRule"/>
</dbReference>
<dbReference type="GO" id="GO:0006355">
    <property type="term" value="P:regulation of DNA-templated transcription"/>
    <property type="evidence" value="ECO:0007669"/>
    <property type="project" value="UniProtKB-UniRule"/>
</dbReference>
<dbReference type="GO" id="GO:0006417">
    <property type="term" value="P:regulation of translation"/>
    <property type="evidence" value="ECO:0007669"/>
    <property type="project" value="UniProtKB-UniRule"/>
</dbReference>
<dbReference type="CDD" id="cd13836">
    <property type="entry name" value="IHF_B"/>
    <property type="match status" value="1"/>
</dbReference>
<dbReference type="FunFam" id="4.10.520.10:FF:000003">
    <property type="entry name" value="Integration host factor subunit beta"/>
    <property type="match status" value="1"/>
</dbReference>
<dbReference type="Gene3D" id="4.10.520.10">
    <property type="entry name" value="IHF-like DNA-binding proteins"/>
    <property type="match status" value="1"/>
</dbReference>
<dbReference type="HAMAP" id="MF_00381">
    <property type="entry name" value="IHF_beta"/>
    <property type="match status" value="1"/>
</dbReference>
<dbReference type="InterPro" id="IPR000119">
    <property type="entry name" value="Hist_DNA-bd"/>
</dbReference>
<dbReference type="InterPro" id="IPR020816">
    <property type="entry name" value="Histone-like_DNA-bd_CS"/>
</dbReference>
<dbReference type="InterPro" id="IPR010992">
    <property type="entry name" value="IHF-like_DNA-bd_dom_sf"/>
</dbReference>
<dbReference type="InterPro" id="IPR005685">
    <property type="entry name" value="IHF_beta"/>
</dbReference>
<dbReference type="NCBIfam" id="TIGR00988">
    <property type="entry name" value="hip"/>
    <property type="match status" value="1"/>
</dbReference>
<dbReference type="NCBIfam" id="NF001222">
    <property type="entry name" value="PRK00199.1"/>
    <property type="match status" value="1"/>
</dbReference>
<dbReference type="PANTHER" id="PTHR33175">
    <property type="entry name" value="DNA-BINDING PROTEIN HU"/>
    <property type="match status" value="1"/>
</dbReference>
<dbReference type="PANTHER" id="PTHR33175:SF5">
    <property type="entry name" value="INTEGRATION HOST FACTOR SUBUNIT BETA"/>
    <property type="match status" value="1"/>
</dbReference>
<dbReference type="Pfam" id="PF00216">
    <property type="entry name" value="Bac_DNA_binding"/>
    <property type="match status" value="1"/>
</dbReference>
<dbReference type="PRINTS" id="PR01727">
    <property type="entry name" value="DNABINDINGHU"/>
</dbReference>
<dbReference type="SMART" id="SM00411">
    <property type="entry name" value="BHL"/>
    <property type="match status" value="1"/>
</dbReference>
<dbReference type="SUPFAM" id="SSF47729">
    <property type="entry name" value="IHF-like DNA-binding proteins"/>
    <property type="match status" value="1"/>
</dbReference>
<dbReference type="PROSITE" id="PS00045">
    <property type="entry name" value="HISTONE_LIKE"/>
    <property type="match status" value="1"/>
</dbReference>
<gene>
    <name evidence="1" type="primary">ihfB</name>
    <name evidence="1" type="synonym">himD</name>
    <name type="ordered locus">SARI_01980</name>
</gene>
<feature type="chain" id="PRO_1000080049" description="Integration host factor subunit beta">
    <location>
        <begin position="1"/>
        <end position="94"/>
    </location>
</feature>
<comment type="function">
    <text evidence="1">This protein is one of the two subunits of integration host factor, a specific DNA-binding protein that functions in genetic recombination as well as in transcriptional and translational control.</text>
</comment>
<comment type="subunit">
    <text evidence="1">Heterodimer of an alpha and a beta chain.</text>
</comment>
<comment type="similarity">
    <text evidence="1">Belongs to the bacterial histone-like protein family.</text>
</comment>
<evidence type="ECO:0000255" key="1">
    <source>
        <dbReference type="HAMAP-Rule" id="MF_00381"/>
    </source>
</evidence>
<organism>
    <name type="scientific">Salmonella arizonae (strain ATCC BAA-731 / CDC346-86 / RSK2980)</name>
    <dbReference type="NCBI Taxonomy" id="41514"/>
    <lineage>
        <taxon>Bacteria</taxon>
        <taxon>Pseudomonadati</taxon>
        <taxon>Pseudomonadota</taxon>
        <taxon>Gammaproteobacteria</taxon>
        <taxon>Enterobacterales</taxon>
        <taxon>Enterobacteriaceae</taxon>
        <taxon>Salmonella</taxon>
    </lineage>
</organism>